<organism>
    <name type="scientific">Saccharomyces cerevisiae (strain ATCC 204508 / S288c)</name>
    <name type="common">Baker's yeast</name>
    <dbReference type="NCBI Taxonomy" id="559292"/>
    <lineage>
        <taxon>Eukaryota</taxon>
        <taxon>Fungi</taxon>
        <taxon>Dikarya</taxon>
        <taxon>Ascomycota</taxon>
        <taxon>Saccharomycotina</taxon>
        <taxon>Saccharomycetes</taxon>
        <taxon>Saccharomycetales</taxon>
        <taxon>Saccharomycetaceae</taxon>
        <taxon>Saccharomyces</taxon>
    </lineage>
</organism>
<feature type="chain" id="PRO_0000299628" description="Putative uncharacterized protein YLR279W">
    <location>
        <begin position="1"/>
        <end position="129"/>
    </location>
</feature>
<feature type="transmembrane region" description="Helical" evidence="1">
    <location>
        <begin position="46"/>
        <end position="66"/>
    </location>
</feature>
<gene>
    <name type="ordered locus">YLR279W</name>
    <name type="ORF">L8003.10A</name>
</gene>
<protein>
    <recommendedName>
        <fullName>Putative uncharacterized protein YLR279W</fullName>
    </recommendedName>
</protein>
<name>YL279_YEAST</name>
<accession>O13540</accession>
<keyword id="KW-0472">Membrane</keyword>
<keyword id="KW-0812">Transmembrane</keyword>
<keyword id="KW-1133">Transmembrane helix</keyword>
<evidence type="ECO:0000255" key="1"/>
<evidence type="ECO:0000305" key="2"/>
<evidence type="ECO:0000305" key="3">
    <source>
    </source>
</evidence>
<sequence length="129" mass="14742">MRFRSQRAVCRSRNYSMYCCSRVFVRNPRLDRRYPQVKILAKLHFFFHFFFSFLLHLISPAVTGGITRAPFLCLGPRVPLFRLERPLHAARTSRRCAGAASVSVDGATVEAPPLWTASCRTTPQVRARA</sequence>
<reference key="1">
    <citation type="journal article" date="1997" name="Nature">
        <title>The nucleotide sequence of Saccharomyces cerevisiae chromosome XII.</title>
        <authorList>
            <person name="Johnston M."/>
            <person name="Hillier L.W."/>
            <person name="Riles L."/>
            <person name="Albermann K."/>
            <person name="Andre B."/>
            <person name="Ansorge W."/>
            <person name="Benes V."/>
            <person name="Brueckner M."/>
            <person name="Delius H."/>
            <person name="Dubois E."/>
            <person name="Duesterhoeft A."/>
            <person name="Entian K.-D."/>
            <person name="Floeth M."/>
            <person name="Goffeau A."/>
            <person name="Hebling U."/>
            <person name="Heumann K."/>
            <person name="Heuss-Neitzel D."/>
            <person name="Hilbert H."/>
            <person name="Hilger F."/>
            <person name="Kleine K."/>
            <person name="Koetter P."/>
            <person name="Louis E.J."/>
            <person name="Messenguy F."/>
            <person name="Mewes H.-W."/>
            <person name="Miosga T."/>
            <person name="Moestl D."/>
            <person name="Mueller-Auer S."/>
            <person name="Nentwich U."/>
            <person name="Obermaier B."/>
            <person name="Piravandi E."/>
            <person name="Pohl T.M."/>
            <person name="Portetelle D."/>
            <person name="Purnelle B."/>
            <person name="Rechmann S."/>
            <person name="Rieger M."/>
            <person name="Rinke M."/>
            <person name="Rose M."/>
            <person name="Scharfe M."/>
            <person name="Scherens B."/>
            <person name="Scholler P."/>
            <person name="Schwager C."/>
            <person name="Schwarz S."/>
            <person name="Underwood A.P."/>
            <person name="Urrestarazu L.A."/>
            <person name="Vandenbol M."/>
            <person name="Verhasselt P."/>
            <person name="Vierendeels F."/>
            <person name="Voet M."/>
            <person name="Volckaert G."/>
            <person name="Voss H."/>
            <person name="Wambutt R."/>
            <person name="Wedler E."/>
            <person name="Wedler H."/>
            <person name="Zimmermann F.K."/>
            <person name="Zollner A."/>
            <person name="Hani J."/>
            <person name="Hoheisel J.D."/>
        </authorList>
    </citation>
    <scope>NUCLEOTIDE SEQUENCE [LARGE SCALE GENOMIC DNA]</scope>
    <source>
        <strain>ATCC 204508 / S288c</strain>
    </source>
</reference>
<reference key="2">
    <citation type="journal article" date="2014" name="G3 (Bethesda)">
        <title>The reference genome sequence of Saccharomyces cerevisiae: Then and now.</title>
        <authorList>
            <person name="Engel S.R."/>
            <person name="Dietrich F.S."/>
            <person name="Fisk D.G."/>
            <person name="Binkley G."/>
            <person name="Balakrishnan R."/>
            <person name="Costanzo M.C."/>
            <person name="Dwight S.S."/>
            <person name="Hitz B.C."/>
            <person name="Karra K."/>
            <person name="Nash R.S."/>
            <person name="Weng S."/>
            <person name="Wong E.D."/>
            <person name="Lloyd P."/>
            <person name="Skrzypek M.S."/>
            <person name="Miyasato S.R."/>
            <person name="Simison M."/>
            <person name="Cherry J.M."/>
        </authorList>
    </citation>
    <scope>GENOME REANNOTATION</scope>
    <source>
        <strain>ATCC 204508 / S288c</strain>
    </source>
</reference>
<proteinExistence type="uncertain"/>
<comment type="subcellular location">
    <subcellularLocation>
        <location evidence="2">Membrane</location>
        <topology evidence="2">Single-pass membrane protein</topology>
    </subcellularLocation>
</comment>
<comment type="miscellaneous">
    <text evidence="2">Partially overlaps YLR280C and YLR281C.</text>
</comment>
<comment type="caution">
    <text evidence="3">Product of a dubious gene prediction unlikely to encode a functional protein. Because of that it is not part of the S.cerevisiae S288c complete/reference proteome set.</text>
</comment>
<dbReference type="EMBL" id="U17243">
    <property type="protein sequence ID" value="AAB67349.1"/>
    <property type="molecule type" value="Genomic_DNA"/>
</dbReference>
<dbReference type="PIR" id="S69304">
    <property type="entry name" value="S69304"/>
</dbReference>
<dbReference type="IntAct" id="O13540">
    <property type="interactions" value="2"/>
</dbReference>
<dbReference type="PaxDb" id="4932-YLR279W"/>
<dbReference type="EnsemblFungi" id="YLR279W_mRNA">
    <property type="protein sequence ID" value="YLR279W"/>
    <property type="gene ID" value="YLR279W"/>
</dbReference>
<dbReference type="AGR" id="SGD:S000004269"/>
<dbReference type="SGD" id="S000004269">
    <property type="gene designation" value="YLR279W"/>
</dbReference>
<dbReference type="HOGENOM" id="CLU_1950505_0_0_1"/>
<dbReference type="GO" id="GO:0016020">
    <property type="term" value="C:membrane"/>
    <property type="evidence" value="ECO:0007669"/>
    <property type="project" value="UniProtKB-SubCell"/>
</dbReference>